<reference key="1">
    <citation type="submission" date="2007-04" db="EMBL/GenBank/DDBJ databases">
        <title>Complete genome sequence of the nitrogen-fixing bacterium Azorhizobium caulinodans ORS571.</title>
        <authorList>
            <person name="Lee K.B."/>
            <person name="Backer P.D."/>
            <person name="Aono T."/>
            <person name="Liu C.T."/>
            <person name="Suzuki S."/>
            <person name="Suzuki T."/>
            <person name="Kaneko T."/>
            <person name="Yamada M."/>
            <person name="Tabata S."/>
            <person name="Kupfer D.M."/>
            <person name="Najar F.Z."/>
            <person name="Wiley G.B."/>
            <person name="Roe B."/>
            <person name="Binnewies T."/>
            <person name="Ussery D."/>
            <person name="Vereecke D."/>
            <person name="Gevers D."/>
            <person name="Holsters M."/>
            <person name="Oyaizu H."/>
        </authorList>
    </citation>
    <scope>NUCLEOTIDE SEQUENCE [LARGE SCALE GENOMIC DNA]</scope>
    <source>
        <strain>ATCC 43989 / DSM 5975 / JCM 20966 / LMG 6465 / NBRC 14845 / NCIMB 13405 / ORS 571</strain>
    </source>
</reference>
<protein>
    <recommendedName>
        <fullName evidence="1">Elongation factor Ts</fullName>
        <shortName evidence="1">EF-Ts</shortName>
    </recommendedName>
</protein>
<feature type="chain" id="PRO_1000071120" description="Elongation factor Ts">
    <location>
        <begin position="1"/>
        <end position="307"/>
    </location>
</feature>
<feature type="region of interest" description="Involved in Mg(2+) ion dislocation from EF-Tu" evidence="1">
    <location>
        <begin position="80"/>
        <end position="83"/>
    </location>
</feature>
<evidence type="ECO:0000255" key="1">
    <source>
        <dbReference type="HAMAP-Rule" id="MF_00050"/>
    </source>
</evidence>
<name>EFTS_AZOC5</name>
<accession>A8I464</accession>
<dbReference type="EMBL" id="AP009384">
    <property type="protein sequence ID" value="BAF87692.1"/>
    <property type="molecule type" value="Genomic_DNA"/>
</dbReference>
<dbReference type="RefSeq" id="WP_012170222.1">
    <property type="nucleotide sequence ID" value="NC_009937.1"/>
</dbReference>
<dbReference type="SMR" id="A8I464"/>
<dbReference type="STRING" id="438753.AZC_1694"/>
<dbReference type="KEGG" id="azc:AZC_1694"/>
<dbReference type="eggNOG" id="COG0264">
    <property type="taxonomic scope" value="Bacteria"/>
</dbReference>
<dbReference type="HOGENOM" id="CLU_047155_2_0_5"/>
<dbReference type="Proteomes" id="UP000000270">
    <property type="component" value="Chromosome"/>
</dbReference>
<dbReference type="GO" id="GO:0005737">
    <property type="term" value="C:cytoplasm"/>
    <property type="evidence" value="ECO:0007669"/>
    <property type="project" value="UniProtKB-SubCell"/>
</dbReference>
<dbReference type="GO" id="GO:0003746">
    <property type="term" value="F:translation elongation factor activity"/>
    <property type="evidence" value="ECO:0007669"/>
    <property type="project" value="UniProtKB-UniRule"/>
</dbReference>
<dbReference type="CDD" id="cd14275">
    <property type="entry name" value="UBA_EF-Ts"/>
    <property type="match status" value="1"/>
</dbReference>
<dbReference type="FunFam" id="1.10.8.10:FF:000001">
    <property type="entry name" value="Elongation factor Ts"/>
    <property type="match status" value="1"/>
</dbReference>
<dbReference type="Gene3D" id="1.10.286.20">
    <property type="match status" value="1"/>
</dbReference>
<dbReference type="Gene3D" id="1.10.8.10">
    <property type="entry name" value="DNA helicase RuvA subunit, C-terminal domain"/>
    <property type="match status" value="1"/>
</dbReference>
<dbReference type="Gene3D" id="3.30.479.20">
    <property type="entry name" value="Elongation factor Ts, dimerisation domain"/>
    <property type="match status" value="2"/>
</dbReference>
<dbReference type="HAMAP" id="MF_00050">
    <property type="entry name" value="EF_Ts"/>
    <property type="match status" value="1"/>
</dbReference>
<dbReference type="InterPro" id="IPR036402">
    <property type="entry name" value="EF-Ts_dimer_sf"/>
</dbReference>
<dbReference type="InterPro" id="IPR001816">
    <property type="entry name" value="Transl_elong_EFTs/EF1B"/>
</dbReference>
<dbReference type="InterPro" id="IPR014039">
    <property type="entry name" value="Transl_elong_EFTs/EF1B_dimer"/>
</dbReference>
<dbReference type="InterPro" id="IPR018101">
    <property type="entry name" value="Transl_elong_Ts_CS"/>
</dbReference>
<dbReference type="InterPro" id="IPR009060">
    <property type="entry name" value="UBA-like_sf"/>
</dbReference>
<dbReference type="NCBIfam" id="TIGR00116">
    <property type="entry name" value="tsf"/>
    <property type="match status" value="1"/>
</dbReference>
<dbReference type="PANTHER" id="PTHR11741">
    <property type="entry name" value="ELONGATION FACTOR TS"/>
    <property type="match status" value="1"/>
</dbReference>
<dbReference type="PANTHER" id="PTHR11741:SF0">
    <property type="entry name" value="ELONGATION FACTOR TS, MITOCHONDRIAL"/>
    <property type="match status" value="1"/>
</dbReference>
<dbReference type="Pfam" id="PF00889">
    <property type="entry name" value="EF_TS"/>
    <property type="match status" value="1"/>
</dbReference>
<dbReference type="SUPFAM" id="SSF54713">
    <property type="entry name" value="Elongation factor Ts (EF-Ts), dimerisation domain"/>
    <property type="match status" value="2"/>
</dbReference>
<dbReference type="SUPFAM" id="SSF46934">
    <property type="entry name" value="UBA-like"/>
    <property type="match status" value="1"/>
</dbReference>
<dbReference type="PROSITE" id="PS01127">
    <property type="entry name" value="EF_TS_2"/>
    <property type="match status" value="1"/>
</dbReference>
<keyword id="KW-0963">Cytoplasm</keyword>
<keyword id="KW-0251">Elongation factor</keyword>
<keyword id="KW-0648">Protein biosynthesis</keyword>
<keyword id="KW-1185">Reference proteome</keyword>
<sequence>MAAITAGLVKELRDKTGAGMMDCKAALTENNGDIEAAIDWLRKKGLAKAAKKAGRVAAEGLVAVESSGHYAAAIEVNAETDFVARNADFQAFVREAAKVALNTDGSIEAVAAAHFPGESVTVADKLATLIATIGENMTLRRSVRLTVSAGVIATYVHGAVSEGQGRIGVLVALESQGDVEKLSTLGRQIAMHVAALNPLALDASGIDEATIAREKAILLEKHQGKPANVQEKIAESGMKTYFKEVTLLEQPFVHDGSKSVAQVLKENEGSVGAPITLKGFVRYALGEGIEKEESDFAAEVAAAAGQS</sequence>
<comment type="function">
    <text evidence="1">Associates with the EF-Tu.GDP complex and induces the exchange of GDP to GTP. It remains bound to the aminoacyl-tRNA.EF-Tu.GTP complex up to the GTP hydrolysis stage on the ribosome.</text>
</comment>
<comment type="subcellular location">
    <subcellularLocation>
        <location evidence="1">Cytoplasm</location>
    </subcellularLocation>
</comment>
<comment type="similarity">
    <text evidence="1">Belongs to the EF-Ts family.</text>
</comment>
<organism>
    <name type="scientific">Azorhizobium caulinodans (strain ATCC 43989 / DSM 5975 / JCM 20966 / LMG 6465 / NBRC 14845 / NCIMB 13405 / ORS 571)</name>
    <dbReference type="NCBI Taxonomy" id="438753"/>
    <lineage>
        <taxon>Bacteria</taxon>
        <taxon>Pseudomonadati</taxon>
        <taxon>Pseudomonadota</taxon>
        <taxon>Alphaproteobacteria</taxon>
        <taxon>Hyphomicrobiales</taxon>
        <taxon>Xanthobacteraceae</taxon>
        <taxon>Azorhizobium</taxon>
    </lineage>
</organism>
<proteinExistence type="inferred from homology"/>
<gene>
    <name evidence="1" type="primary">tsf</name>
    <name type="ordered locus">AZC_1694</name>
</gene>